<feature type="signal peptide" evidence="3">
    <location>
        <begin position="1"/>
        <end position="24"/>
    </location>
</feature>
<feature type="chain" id="PRO_0000015380" description="Interleukin-19">
    <location>
        <begin position="25"/>
        <end position="176"/>
    </location>
</feature>
<feature type="glycosylation site" description="N-linked (GlcNAc...) asparagine" evidence="3">
    <location>
        <position position="56"/>
    </location>
</feature>
<feature type="glycosylation site" description="N-linked (GlcNAc...) asparagine" evidence="3">
    <location>
        <position position="127"/>
    </location>
</feature>
<feature type="glycosylation site" description="N-linked (GlcNAc...) asparagine" evidence="3">
    <location>
        <position position="134"/>
    </location>
</feature>
<feature type="disulfide bond" evidence="1">
    <location>
        <begin position="28"/>
        <end position="120"/>
    </location>
</feature>
<feature type="disulfide bond" evidence="1">
    <location>
        <begin position="74"/>
        <end position="126"/>
    </location>
</feature>
<feature type="disulfide bond" evidence="1">
    <location>
        <begin position="75"/>
        <end position="128"/>
    </location>
</feature>
<dbReference type="EMBL" id="AF453945">
    <property type="protein sequence ID" value="AAN40905.1"/>
    <property type="molecule type" value="mRNA"/>
</dbReference>
<dbReference type="CCDS" id="CCDS15264.1"/>
<dbReference type="RefSeq" id="NP_001009940.1">
    <property type="nucleotide sequence ID" value="NM_001009940.2"/>
</dbReference>
<dbReference type="RefSeq" id="XP_006529769.1">
    <property type="nucleotide sequence ID" value="XM_006529706.1"/>
</dbReference>
<dbReference type="SMR" id="Q8CJ70"/>
<dbReference type="FunCoup" id="Q8CJ70">
    <property type="interactions" value="341"/>
</dbReference>
<dbReference type="STRING" id="10090.ENSMUSP00000139406"/>
<dbReference type="GlyCosmos" id="Q8CJ70">
    <property type="glycosylation" value="3 sites, No reported glycans"/>
</dbReference>
<dbReference type="GlyGen" id="Q8CJ70">
    <property type="glycosylation" value="3 sites"/>
</dbReference>
<dbReference type="PaxDb" id="10090-ENSMUSP00000108084"/>
<dbReference type="ProteomicsDB" id="267233"/>
<dbReference type="Antibodypedia" id="34588">
    <property type="antibodies" value="409 antibodies from 31 providers"/>
</dbReference>
<dbReference type="DNASU" id="329244"/>
<dbReference type="Ensembl" id="ENSMUST00000016668.13">
    <property type="protein sequence ID" value="ENSMUSP00000016668.7"/>
    <property type="gene ID" value="ENSMUSG00000016524.13"/>
</dbReference>
<dbReference type="Ensembl" id="ENSMUST00000112465.2">
    <property type="protein sequence ID" value="ENSMUSP00000108084.2"/>
    <property type="gene ID" value="ENSMUSG00000016524.13"/>
</dbReference>
<dbReference type="Ensembl" id="ENSMUST00000187410.7">
    <property type="protein sequence ID" value="ENSMUSP00000139406.2"/>
    <property type="gene ID" value="ENSMUSG00000016524.13"/>
</dbReference>
<dbReference type="GeneID" id="329244"/>
<dbReference type="KEGG" id="mmu:329244"/>
<dbReference type="UCSC" id="uc007cms.1">
    <property type="organism name" value="mouse"/>
</dbReference>
<dbReference type="AGR" id="MGI:1890472"/>
<dbReference type="CTD" id="29949"/>
<dbReference type="MGI" id="MGI:1890472">
    <property type="gene designation" value="Il19"/>
</dbReference>
<dbReference type="VEuPathDB" id="HostDB:ENSMUSG00000016524"/>
<dbReference type="eggNOG" id="ENOG502SRCR">
    <property type="taxonomic scope" value="Eukaryota"/>
</dbReference>
<dbReference type="GeneTree" id="ENSGT00950000183124"/>
<dbReference type="HOGENOM" id="CLU_098690_0_0_1"/>
<dbReference type="InParanoid" id="Q8CJ70"/>
<dbReference type="OMA" id="FLYMQKA"/>
<dbReference type="OrthoDB" id="9938154at2759"/>
<dbReference type="PhylomeDB" id="Q8CJ70"/>
<dbReference type="TreeFam" id="TF333253"/>
<dbReference type="Reactome" id="R-MMU-8854691">
    <property type="pathway name" value="Interleukin-20 family signaling"/>
</dbReference>
<dbReference type="BioGRID-ORCS" id="329244">
    <property type="hits" value="2 hits in 76 CRISPR screens"/>
</dbReference>
<dbReference type="PRO" id="PR:Q8CJ70"/>
<dbReference type="Proteomes" id="UP000000589">
    <property type="component" value="Chromosome 1"/>
</dbReference>
<dbReference type="RNAct" id="Q8CJ70">
    <property type="molecule type" value="protein"/>
</dbReference>
<dbReference type="Bgee" id="ENSMUSG00000016524">
    <property type="expression patterns" value="Expressed in mesodermal cell in embryo and 8 other cell types or tissues"/>
</dbReference>
<dbReference type="ExpressionAtlas" id="Q8CJ70">
    <property type="expression patterns" value="baseline and differential"/>
</dbReference>
<dbReference type="GO" id="GO:0005615">
    <property type="term" value="C:extracellular space"/>
    <property type="evidence" value="ECO:0007669"/>
    <property type="project" value="UniProtKB-KW"/>
</dbReference>
<dbReference type="GO" id="GO:0005125">
    <property type="term" value="F:cytokine activity"/>
    <property type="evidence" value="ECO:0007669"/>
    <property type="project" value="UniProtKB-KW"/>
</dbReference>
<dbReference type="GO" id="GO:0006915">
    <property type="term" value="P:apoptotic process"/>
    <property type="evidence" value="ECO:0007669"/>
    <property type="project" value="UniProtKB-KW"/>
</dbReference>
<dbReference type="GO" id="GO:2001237">
    <property type="term" value="P:negative regulation of extrinsic apoptotic signaling pathway"/>
    <property type="evidence" value="ECO:0000314"/>
    <property type="project" value="MGI"/>
</dbReference>
<dbReference type="GO" id="GO:0010989">
    <property type="term" value="P:negative regulation of low-density lipoprotein particle clearance"/>
    <property type="evidence" value="ECO:0000315"/>
    <property type="project" value="BHF-UCL"/>
</dbReference>
<dbReference type="GO" id="GO:2001235">
    <property type="term" value="P:positive regulation of apoptotic signaling pathway"/>
    <property type="evidence" value="ECO:0000314"/>
    <property type="project" value="MGI"/>
</dbReference>
<dbReference type="GO" id="GO:2001244">
    <property type="term" value="P:positive regulation of intrinsic apoptotic signaling pathway"/>
    <property type="evidence" value="ECO:0000316"/>
    <property type="project" value="MGI"/>
</dbReference>
<dbReference type="GO" id="GO:0072593">
    <property type="term" value="P:reactive oxygen species metabolic process"/>
    <property type="evidence" value="ECO:0000314"/>
    <property type="project" value="MGI"/>
</dbReference>
<dbReference type="Gene3D" id="1.20.1250.10">
    <property type="match status" value="1"/>
</dbReference>
<dbReference type="InterPro" id="IPR009079">
    <property type="entry name" value="4_helix_cytokine-like_core"/>
</dbReference>
<dbReference type="InterPro" id="IPR020443">
    <property type="entry name" value="IL-10/19/20/24/26"/>
</dbReference>
<dbReference type="InterPro" id="IPR020423">
    <property type="entry name" value="IL-10_CS"/>
</dbReference>
<dbReference type="InterPro" id="IPR020421">
    <property type="entry name" value="IL-19"/>
</dbReference>
<dbReference type="PANTHER" id="PTHR48482:SF3">
    <property type="entry name" value="INTERLEUKIN-19"/>
    <property type="match status" value="1"/>
</dbReference>
<dbReference type="PANTHER" id="PTHR48482">
    <property type="entry name" value="INTERLEUKIN-19-RELATED"/>
    <property type="match status" value="1"/>
</dbReference>
<dbReference type="Pfam" id="PF00726">
    <property type="entry name" value="IL10"/>
    <property type="match status" value="1"/>
</dbReference>
<dbReference type="PRINTS" id="PR01934">
    <property type="entry name" value="INTRLEUKIN19"/>
</dbReference>
<dbReference type="SUPFAM" id="SSF47266">
    <property type="entry name" value="4-helical cytokines"/>
    <property type="match status" value="1"/>
</dbReference>
<dbReference type="PROSITE" id="PS00520">
    <property type="entry name" value="INTERLEUKIN_10"/>
    <property type="match status" value="1"/>
</dbReference>
<evidence type="ECO:0000250" key="1"/>
<evidence type="ECO:0000250" key="2">
    <source>
        <dbReference type="UniProtKB" id="Q9UHD0"/>
    </source>
</evidence>
<evidence type="ECO:0000255" key="3"/>
<evidence type="ECO:0000269" key="4">
    <source>
    </source>
</evidence>
<evidence type="ECO:0000269" key="5">
    <source>
    </source>
</evidence>
<evidence type="ECO:0000269" key="6">
    <source>
    </source>
</evidence>
<evidence type="ECO:0000269" key="7">
    <source>
    </source>
</evidence>
<evidence type="ECO:0000269" key="8">
    <source>
    </source>
</evidence>
<evidence type="ECO:0000305" key="9"/>
<proteinExistence type="evidence at transcript level"/>
<name>IL19_MOUSE</name>
<comment type="function">
    <text evidence="2 4 5 7 8">Cytokine that functions as an anti-inflammatory and proangiogenic factor (PubMed:12370360, PubMed:27053520). Polarizes adaptive immunity to an anti-inflammatory phenotype through induction of T-helper 2 responses by both down-regulation of IFN-gamma and up-regulation of IL4 and IL5 (PubMed:15557163). Produced by osteocytes, stimulates granulopoiesis and neutrophil formation (PubMed:33684929). Exerts its biological effect through a receptor complex consisting of a heterodimer of IL20RA and IL20RB. In turn, activates the Janus kinase (JAK) and signal transducer and activator of transcription (STAT) pathway, and importantly, STAT3 (By similarity).</text>
</comment>
<comment type="subcellular location">
    <subcellularLocation>
        <location>Secreted</location>
    </subcellularLocation>
</comment>
<comment type="disruption phenotype">
    <text evidence="6 7">IL19-deficient mice are more susceptible to innate-mediated colitis and develop more severe inflammation in response to injury (PubMed:19834971). In addition, mice respond to vascular endothelial growth factor (VEGF) significantly less than wild-type mice (PubMed:27053520).</text>
</comment>
<comment type="similarity">
    <text evidence="9">Belongs to the IL-10 family.</text>
</comment>
<protein>
    <recommendedName>
        <fullName>Interleukin-19</fullName>
        <shortName>IL-19</shortName>
    </recommendedName>
</protein>
<sequence length="176" mass="20288">MKTQCASTWLLGMTLILCSVHIYSLRRCLISVDMRLIEKSFHEIKRAMQTKDTFKNVTILSLENLRSIKPGDVCCMTNNLLTFYRDRVFQDHQERSLEVLRRISSIANSFLCVQKSLERCQVHRQCNCSQEATNATRIIHDNYNQLEVSSAALKSLGELNILLAWIDRNHLETPAA</sequence>
<organism>
    <name type="scientific">Mus musculus</name>
    <name type="common">Mouse</name>
    <dbReference type="NCBI Taxonomy" id="10090"/>
    <lineage>
        <taxon>Eukaryota</taxon>
        <taxon>Metazoa</taxon>
        <taxon>Chordata</taxon>
        <taxon>Craniata</taxon>
        <taxon>Vertebrata</taxon>
        <taxon>Euteleostomi</taxon>
        <taxon>Mammalia</taxon>
        <taxon>Eutheria</taxon>
        <taxon>Euarchontoglires</taxon>
        <taxon>Glires</taxon>
        <taxon>Rodentia</taxon>
        <taxon>Myomorpha</taxon>
        <taxon>Muroidea</taxon>
        <taxon>Muridae</taxon>
        <taxon>Murinae</taxon>
        <taxon>Mus</taxon>
        <taxon>Mus</taxon>
    </lineage>
</organism>
<reference key="1">
    <citation type="journal article" date="2002" name="J. Immunol.">
        <title>IL-19 induces production of IL-6 and TNF-alpha and results in cell apoptosis through TNF-alpha.</title>
        <authorList>
            <person name="Liao Y.-C."/>
            <person name="Liang W.G."/>
            <person name="Chen F.W."/>
            <person name="Hsu J.H."/>
            <person name="Yang J.J."/>
            <person name="Chang M.-S."/>
        </authorList>
    </citation>
    <scope>NUCLEOTIDE SEQUENCE [MRNA]</scope>
    <scope>FUNCTION</scope>
    <source>
        <strain>Swiss Webster / NIH</strain>
    </source>
</reference>
<reference key="2">
    <citation type="journal article" date="2004" name="J. Immunol.">
        <title>IL-19 induced Th2 cytokines and was up-regulated in asthma patients.</title>
        <authorList>
            <person name="Liao S.C."/>
            <person name="Cheng Y.C."/>
            <person name="Wang Y.C."/>
            <person name="Wang C.W."/>
            <person name="Yang S.M."/>
            <person name="Yu C.K."/>
            <person name="Shieh C.C."/>
            <person name="Cheng K.C."/>
            <person name="Lee M.F."/>
            <person name="Chiang S.R."/>
            <person name="Shieh J.M."/>
            <person name="Chang M.S."/>
        </authorList>
    </citation>
    <scope>FUNCTION</scope>
</reference>
<reference key="3">
    <citation type="journal article" date="2010" name="Inflamm. Bowel Dis.">
        <title>Interleukin-19 protects mice from innate-mediated colonic inflammation.</title>
        <authorList>
            <person name="Azuma Y.T."/>
            <person name="Matsuo Y."/>
            <person name="Kuwamura M."/>
            <person name="Yancopoulos G.D."/>
            <person name="Valenzuela D.M."/>
            <person name="Murphy A.J."/>
            <person name="Nakajima H."/>
            <person name="Karow M."/>
            <person name="Takeuchi T."/>
        </authorList>
    </citation>
    <scope>FUNCTION</scope>
    <scope>DISRUPTION PHENOTYPE</scope>
</reference>
<reference key="4">
    <citation type="journal article" date="2016" name="Am. J. Physiol.">
        <title>Interleukin-19 induces angiogenesis in the absence of hypoxia by direct and indirect immune mechanisms.</title>
        <authorList>
            <person name="Kako F."/>
            <person name="Gabunia K."/>
            <person name="Ray M."/>
            <person name="Kelemen S.E."/>
            <person name="England R.N."/>
            <person name="Kako B."/>
            <person name="Scalia R.G."/>
            <person name="Autieri M.V."/>
        </authorList>
    </citation>
    <scope>FUNCTION</scope>
    <scope>DISRUPTION PHENOTYPE</scope>
</reference>
<reference key="5">
    <citation type="journal article" date="2021" name="Blood">
        <title>Osteocytes regulate neutrophil development through IL-19: a potent cytokine for neutropenia treatment.</title>
        <authorList>
            <person name="Xiao M."/>
            <person name="Zhang W."/>
            <person name="Liu W."/>
            <person name="Mao L."/>
            <person name="Yang J."/>
            <person name="Hu L."/>
            <person name="Zhang S."/>
            <person name="Zheng Y."/>
            <person name="Liu A."/>
            <person name="Song Q."/>
            <person name="Li Y."/>
            <person name="Xiao G."/>
            <person name="Zou Z."/>
            <person name="Bai X."/>
        </authorList>
    </citation>
    <scope>FUNCTION</scope>
</reference>
<gene>
    <name type="primary">Il19</name>
</gene>
<accession>Q8CJ70</accession>
<keyword id="KW-0053">Apoptosis</keyword>
<keyword id="KW-0202">Cytokine</keyword>
<keyword id="KW-1015">Disulfide bond</keyword>
<keyword id="KW-0325">Glycoprotein</keyword>
<keyword id="KW-1185">Reference proteome</keyword>
<keyword id="KW-0964">Secreted</keyword>
<keyword id="KW-0732">Signal</keyword>